<sequence>MNTIRNSICLTIITMVLCGFLFPLAITLIGQIFFYQQANGSLITYDNRIVGSKLIGQHWTETRYFHGRPSAVDYNMNPEKLYKNGVSSGGSNESNGNTELIARMKHHVKFGNSNVTIDAATSSESGLDPHITVENALKQAPRIADARHVSTSRVADLIQHRKQRGVLTNDYVNVLELNIALDKMKD</sequence>
<keyword id="KW-0067">ATP-binding</keyword>
<keyword id="KW-1003">Cell membrane</keyword>
<keyword id="KW-0406">Ion transport</keyword>
<keyword id="KW-0472">Membrane</keyword>
<keyword id="KW-0547">Nucleotide-binding</keyword>
<keyword id="KW-0630">Potassium</keyword>
<keyword id="KW-0633">Potassium transport</keyword>
<keyword id="KW-0812">Transmembrane</keyword>
<keyword id="KW-1133">Transmembrane helix</keyword>
<keyword id="KW-0813">Transport</keyword>
<gene>
    <name evidence="1" type="primary">kdpC</name>
    <name type="ordered locus">SACOL2066</name>
</gene>
<protein>
    <recommendedName>
        <fullName evidence="1">Potassium-transporting ATPase KdpC subunit</fullName>
    </recommendedName>
    <alternativeName>
        <fullName evidence="1">ATP phosphohydrolase [potassium-transporting] C chain</fullName>
    </alternativeName>
    <alternativeName>
        <fullName evidence="1">Potassium-binding and translocating subunit C</fullName>
    </alternativeName>
    <alternativeName>
        <fullName evidence="1">Potassium-translocating ATPase C chain</fullName>
    </alternativeName>
</protein>
<name>KDPC_STAAC</name>
<dbReference type="EMBL" id="CP000046">
    <property type="protein sequence ID" value="AAW37028.1"/>
    <property type="molecule type" value="Genomic_DNA"/>
</dbReference>
<dbReference type="RefSeq" id="WP_001092407.1">
    <property type="nucleotide sequence ID" value="NC_002951.2"/>
</dbReference>
<dbReference type="SMR" id="Q5HEC5"/>
<dbReference type="KEGG" id="sac:SACOL2066"/>
<dbReference type="HOGENOM" id="CLU_077094_2_0_9"/>
<dbReference type="Proteomes" id="UP000000530">
    <property type="component" value="Chromosome"/>
</dbReference>
<dbReference type="GO" id="GO:0005886">
    <property type="term" value="C:plasma membrane"/>
    <property type="evidence" value="ECO:0007669"/>
    <property type="project" value="UniProtKB-SubCell"/>
</dbReference>
<dbReference type="GO" id="GO:0005524">
    <property type="term" value="F:ATP binding"/>
    <property type="evidence" value="ECO:0007669"/>
    <property type="project" value="UniProtKB-UniRule"/>
</dbReference>
<dbReference type="GO" id="GO:0008556">
    <property type="term" value="F:P-type potassium transmembrane transporter activity"/>
    <property type="evidence" value="ECO:0007669"/>
    <property type="project" value="InterPro"/>
</dbReference>
<dbReference type="HAMAP" id="MF_00276">
    <property type="entry name" value="KdpC"/>
    <property type="match status" value="1"/>
</dbReference>
<dbReference type="InterPro" id="IPR003820">
    <property type="entry name" value="KdpC"/>
</dbReference>
<dbReference type="NCBIfam" id="TIGR00681">
    <property type="entry name" value="kdpC"/>
    <property type="match status" value="1"/>
</dbReference>
<dbReference type="NCBIfam" id="NF010602">
    <property type="entry name" value="PRK13998.1"/>
    <property type="match status" value="1"/>
</dbReference>
<dbReference type="PANTHER" id="PTHR30042">
    <property type="entry name" value="POTASSIUM-TRANSPORTING ATPASE C CHAIN"/>
    <property type="match status" value="1"/>
</dbReference>
<dbReference type="PANTHER" id="PTHR30042:SF2">
    <property type="entry name" value="POTASSIUM-TRANSPORTING ATPASE KDPC SUBUNIT"/>
    <property type="match status" value="1"/>
</dbReference>
<dbReference type="Pfam" id="PF02669">
    <property type="entry name" value="KdpC"/>
    <property type="match status" value="1"/>
</dbReference>
<dbReference type="PIRSF" id="PIRSF001296">
    <property type="entry name" value="K_ATPase_KdpC"/>
    <property type="match status" value="1"/>
</dbReference>
<organism>
    <name type="scientific">Staphylococcus aureus (strain COL)</name>
    <dbReference type="NCBI Taxonomy" id="93062"/>
    <lineage>
        <taxon>Bacteria</taxon>
        <taxon>Bacillati</taxon>
        <taxon>Bacillota</taxon>
        <taxon>Bacilli</taxon>
        <taxon>Bacillales</taxon>
        <taxon>Staphylococcaceae</taxon>
        <taxon>Staphylococcus</taxon>
    </lineage>
</organism>
<comment type="function">
    <text evidence="1">Part of the high-affinity ATP-driven potassium transport (or Kdp) system, which catalyzes the hydrolysis of ATP coupled with the electrogenic transport of potassium into the cytoplasm. This subunit acts as a catalytic chaperone that increases the ATP-binding affinity of the ATP-hydrolyzing subunit KdpB by the formation of a transient KdpB/KdpC/ATP ternary complex.</text>
</comment>
<comment type="subunit">
    <text evidence="1">The system is composed of three essential subunits: KdpA, KdpB and KdpC.</text>
</comment>
<comment type="subcellular location">
    <subcellularLocation>
        <location evidence="1">Cell membrane</location>
        <topology evidence="1">Single-pass membrane protein</topology>
    </subcellularLocation>
</comment>
<comment type="similarity">
    <text evidence="1">Belongs to the KdpC family.</text>
</comment>
<reference key="1">
    <citation type="journal article" date="2005" name="J. Bacteriol.">
        <title>Insights on evolution of virulence and resistance from the complete genome analysis of an early methicillin-resistant Staphylococcus aureus strain and a biofilm-producing methicillin-resistant Staphylococcus epidermidis strain.</title>
        <authorList>
            <person name="Gill S.R."/>
            <person name="Fouts D.E."/>
            <person name="Archer G.L."/>
            <person name="Mongodin E.F."/>
            <person name="DeBoy R.T."/>
            <person name="Ravel J."/>
            <person name="Paulsen I.T."/>
            <person name="Kolonay J.F."/>
            <person name="Brinkac L.M."/>
            <person name="Beanan M.J."/>
            <person name="Dodson R.J."/>
            <person name="Daugherty S.C."/>
            <person name="Madupu R."/>
            <person name="Angiuoli S.V."/>
            <person name="Durkin A.S."/>
            <person name="Haft D.H."/>
            <person name="Vamathevan J.J."/>
            <person name="Khouri H."/>
            <person name="Utterback T.R."/>
            <person name="Lee C."/>
            <person name="Dimitrov G."/>
            <person name="Jiang L."/>
            <person name="Qin H."/>
            <person name="Weidman J."/>
            <person name="Tran K."/>
            <person name="Kang K.H."/>
            <person name="Hance I.R."/>
            <person name="Nelson K.E."/>
            <person name="Fraser C.M."/>
        </authorList>
    </citation>
    <scope>NUCLEOTIDE SEQUENCE [LARGE SCALE GENOMIC DNA]</scope>
    <source>
        <strain>COL</strain>
    </source>
</reference>
<evidence type="ECO:0000255" key="1">
    <source>
        <dbReference type="HAMAP-Rule" id="MF_00276"/>
    </source>
</evidence>
<proteinExistence type="inferred from homology"/>
<feature type="chain" id="PRO_0000197010" description="Potassium-transporting ATPase KdpC subunit">
    <location>
        <begin position="1"/>
        <end position="186"/>
    </location>
</feature>
<feature type="transmembrane region" description="Helical" evidence="1">
    <location>
        <begin position="10"/>
        <end position="30"/>
    </location>
</feature>
<accession>Q5HEC5</accession>